<accession>A5ERK2</accession>
<sequence length="175" mass="18432">MKAQPIRAAVRIIGIDPGLRRTGWGVIESEGNRLIYVGCGSVEPPDDLPLANRLLAIHEGLAKVLNDFQPLEAAVEQTFVNKDGVATLKLGQARGIAMLAPAMFGISVAEYAPNQVKKTVVGAGHADKGQIAVMLKILLPKAEPPSADAADALAIAITHAHHRQGQALRMKVAGL</sequence>
<organism>
    <name type="scientific">Bradyrhizobium sp. (strain BTAi1 / ATCC BAA-1182)</name>
    <dbReference type="NCBI Taxonomy" id="288000"/>
    <lineage>
        <taxon>Bacteria</taxon>
        <taxon>Pseudomonadati</taxon>
        <taxon>Pseudomonadota</taxon>
        <taxon>Alphaproteobacteria</taxon>
        <taxon>Hyphomicrobiales</taxon>
        <taxon>Nitrobacteraceae</taxon>
        <taxon>Bradyrhizobium</taxon>
    </lineage>
</organism>
<reference key="1">
    <citation type="journal article" date="2007" name="Science">
        <title>Legumes symbioses: absence of nod genes in photosynthetic bradyrhizobia.</title>
        <authorList>
            <person name="Giraud E."/>
            <person name="Moulin L."/>
            <person name="Vallenet D."/>
            <person name="Barbe V."/>
            <person name="Cytryn E."/>
            <person name="Avarre J.-C."/>
            <person name="Jaubert M."/>
            <person name="Simon D."/>
            <person name="Cartieaux F."/>
            <person name="Prin Y."/>
            <person name="Bena G."/>
            <person name="Hannibal L."/>
            <person name="Fardoux J."/>
            <person name="Kojadinovic M."/>
            <person name="Vuillet L."/>
            <person name="Lajus A."/>
            <person name="Cruveiller S."/>
            <person name="Rouy Z."/>
            <person name="Mangenot S."/>
            <person name="Segurens B."/>
            <person name="Dossat C."/>
            <person name="Franck W.L."/>
            <person name="Chang W.-S."/>
            <person name="Saunders E."/>
            <person name="Bruce D."/>
            <person name="Richardson P."/>
            <person name="Normand P."/>
            <person name="Dreyfus B."/>
            <person name="Pignol D."/>
            <person name="Stacey G."/>
            <person name="Emerich D."/>
            <person name="Vermeglio A."/>
            <person name="Medigue C."/>
            <person name="Sadowsky M."/>
        </authorList>
    </citation>
    <scope>NUCLEOTIDE SEQUENCE [LARGE SCALE GENOMIC DNA]</scope>
    <source>
        <strain>BTAi1 / ATCC BAA-1182</strain>
    </source>
</reference>
<evidence type="ECO:0000255" key="1">
    <source>
        <dbReference type="HAMAP-Rule" id="MF_00034"/>
    </source>
</evidence>
<dbReference type="EC" id="3.1.21.10" evidence="1"/>
<dbReference type="EMBL" id="CP000494">
    <property type="protein sequence ID" value="ABQ38796.1"/>
    <property type="molecule type" value="Genomic_DNA"/>
</dbReference>
<dbReference type="RefSeq" id="WP_012046730.1">
    <property type="nucleotide sequence ID" value="NC_009485.1"/>
</dbReference>
<dbReference type="SMR" id="A5ERK2"/>
<dbReference type="STRING" id="288000.BBta_6909"/>
<dbReference type="KEGG" id="bbt:BBta_6909"/>
<dbReference type="eggNOG" id="COG0817">
    <property type="taxonomic scope" value="Bacteria"/>
</dbReference>
<dbReference type="HOGENOM" id="CLU_091257_1_0_5"/>
<dbReference type="OrthoDB" id="9805499at2"/>
<dbReference type="Proteomes" id="UP000000246">
    <property type="component" value="Chromosome"/>
</dbReference>
<dbReference type="GO" id="GO:0005737">
    <property type="term" value="C:cytoplasm"/>
    <property type="evidence" value="ECO:0007669"/>
    <property type="project" value="UniProtKB-SubCell"/>
</dbReference>
<dbReference type="GO" id="GO:0048476">
    <property type="term" value="C:Holliday junction resolvase complex"/>
    <property type="evidence" value="ECO:0007669"/>
    <property type="project" value="UniProtKB-UniRule"/>
</dbReference>
<dbReference type="GO" id="GO:0008821">
    <property type="term" value="F:crossover junction DNA endonuclease activity"/>
    <property type="evidence" value="ECO:0007669"/>
    <property type="project" value="UniProtKB-UniRule"/>
</dbReference>
<dbReference type="GO" id="GO:0003677">
    <property type="term" value="F:DNA binding"/>
    <property type="evidence" value="ECO:0007669"/>
    <property type="project" value="UniProtKB-KW"/>
</dbReference>
<dbReference type="GO" id="GO:0000287">
    <property type="term" value="F:magnesium ion binding"/>
    <property type="evidence" value="ECO:0007669"/>
    <property type="project" value="UniProtKB-UniRule"/>
</dbReference>
<dbReference type="GO" id="GO:0006310">
    <property type="term" value="P:DNA recombination"/>
    <property type="evidence" value="ECO:0007669"/>
    <property type="project" value="UniProtKB-UniRule"/>
</dbReference>
<dbReference type="GO" id="GO:0006281">
    <property type="term" value="P:DNA repair"/>
    <property type="evidence" value="ECO:0007669"/>
    <property type="project" value="UniProtKB-UniRule"/>
</dbReference>
<dbReference type="CDD" id="cd16962">
    <property type="entry name" value="RuvC"/>
    <property type="match status" value="1"/>
</dbReference>
<dbReference type="FunFam" id="3.30.420.10:FF:000002">
    <property type="entry name" value="Crossover junction endodeoxyribonuclease RuvC"/>
    <property type="match status" value="1"/>
</dbReference>
<dbReference type="Gene3D" id="3.30.420.10">
    <property type="entry name" value="Ribonuclease H-like superfamily/Ribonuclease H"/>
    <property type="match status" value="1"/>
</dbReference>
<dbReference type="HAMAP" id="MF_00034">
    <property type="entry name" value="RuvC"/>
    <property type="match status" value="1"/>
</dbReference>
<dbReference type="InterPro" id="IPR012337">
    <property type="entry name" value="RNaseH-like_sf"/>
</dbReference>
<dbReference type="InterPro" id="IPR036397">
    <property type="entry name" value="RNaseH_sf"/>
</dbReference>
<dbReference type="InterPro" id="IPR020563">
    <property type="entry name" value="X-over_junc_endoDNase_Mg_BS"/>
</dbReference>
<dbReference type="InterPro" id="IPR002176">
    <property type="entry name" value="X-over_junc_endoDNase_RuvC"/>
</dbReference>
<dbReference type="NCBIfam" id="TIGR00228">
    <property type="entry name" value="ruvC"/>
    <property type="match status" value="1"/>
</dbReference>
<dbReference type="PANTHER" id="PTHR30194">
    <property type="entry name" value="CROSSOVER JUNCTION ENDODEOXYRIBONUCLEASE RUVC"/>
    <property type="match status" value="1"/>
</dbReference>
<dbReference type="PANTHER" id="PTHR30194:SF3">
    <property type="entry name" value="CROSSOVER JUNCTION ENDODEOXYRIBONUCLEASE RUVC"/>
    <property type="match status" value="1"/>
</dbReference>
<dbReference type="Pfam" id="PF02075">
    <property type="entry name" value="RuvC"/>
    <property type="match status" value="1"/>
</dbReference>
<dbReference type="PRINTS" id="PR00696">
    <property type="entry name" value="RSOLVASERUVC"/>
</dbReference>
<dbReference type="SUPFAM" id="SSF53098">
    <property type="entry name" value="Ribonuclease H-like"/>
    <property type="match status" value="1"/>
</dbReference>
<dbReference type="PROSITE" id="PS01321">
    <property type="entry name" value="RUVC"/>
    <property type="match status" value="1"/>
</dbReference>
<name>RUVC_BRASB</name>
<protein>
    <recommendedName>
        <fullName evidence="1">Crossover junction endodeoxyribonuclease RuvC</fullName>
        <ecNumber evidence="1">3.1.21.10</ecNumber>
    </recommendedName>
    <alternativeName>
        <fullName evidence="1">Holliday junction nuclease RuvC</fullName>
    </alternativeName>
    <alternativeName>
        <fullName evidence="1">Holliday junction resolvase RuvC</fullName>
    </alternativeName>
</protein>
<keyword id="KW-0963">Cytoplasm</keyword>
<keyword id="KW-0227">DNA damage</keyword>
<keyword id="KW-0233">DNA recombination</keyword>
<keyword id="KW-0234">DNA repair</keyword>
<keyword id="KW-0238">DNA-binding</keyword>
<keyword id="KW-0255">Endonuclease</keyword>
<keyword id="KW-0378">Hydrolase</keyword>
<keyword id="KW-0460">Magnesium</keyword>
<keyword id="KW-0479">Metal-binding</keyword>
<keyword id="KW-0540">Nuclease</keyword>
<keyword id="KW-1185">Reference proteome</keyword>
<proteinExistence type="inferred from homology"/>
<comment type="function">
    <text evidence="1">The RuvA-RuvB-RuvC complex processes Holliday junction (HJ) DNA during genetic recombination and DNA repair. Endonuclease that resolves HJ intermediates. Cleaves cruciform DNA by making single-stranded nicks across the HJ at symmetrical positions within the homologous arms, yielding a 5'-phosphate and a 3'-hydroxyl group; requires a central core of homology in the junction. The consensus cleavage sequence is 5'-(A/T)TT(C/G)-3'. Cleavage occurs on the 3'-side of the TT dinucleotide at the point of strand exchange. HJ branch migration catalyzed by RuvA-RuvB allows RuvC to scan DNA until it finds its consensus sequence, where it cleaves and resolves the cruciform DNA.</text>
</comment>
<comment type="catalytic activity">
    <reaction evidence="1">
        <text>Endonucleolytic cleavage at a junction such as a reciprocal single-stranded crossover between two homologous DNA duplexes (Holliday junction).</text>
        <dbReference type="EC" id="3.1.21.10"/>
    </reaction>
</comment>
<comment type="cofactor">
    <cofactor evidence="1">
        <name>Mg(2+)</name>
        <dbReference type="ChEBI" id="CHEBI:18420"/>
    </cofactor>
    <text evidence="1">Binds 2 Mg(2+) ion per subunit.</text>
</comment>
<comment type="subunit">
    <text evidence="1">Homodimer which binds Holliday junction (HJ) DNA. The HJ becomes 2-fold symmetrical on binding to RuvC with unstacked arms; it has a different conformation from HJ DNA in complex with RuvA. In the full resolvosome a probable DNA-RuvA(4)-RuvB(12)-RuvC(2) complex forms which resolves the HJ.</text>
</comment>
<comment type="subcellular location">
    <subcellularLocation>
        <location evidence="1">Cytoplasm</location>
    </subcellularLocation>
</comment>
<comment type="similarity">
    <text evidence="1">Belongs to the RuvC family.</text>
</comment>
<gene>
    <name evidence="1" type="primary">ruvC</name>
    <name type="ordered locus">BBta_6909</name>
</gene>
<feature type="chain" id="PRO_1000002723" description="Crossover junction endodeoxyribonuclease RuvC">
    <location>
        <begin position="1"/>
        <end position="175"/>
    </location>
</feature>
<feature type="active site" evidence="1">
    <location>
        <position position="16"/>
    </location>
</feature>
<feature type="active site" evidence="1">
    <location>
        <position position="76"/>
    </location>
</feature>
<feature type="active site" evidence="1">
    <location>
        <position position="148"/>
    </location>
</feature>
<feature type="binding site" evidence="1">
    <location>
        <position position="16"/>
    </location>
    <ligand>
        <name>Mg(2+)</name>
        <dbReference type="ChEBI" id="CHEBI:18420"/>
        <label>1</label>
    </ligand>
</feature>
<feature type="binding site" evidence="1">
    <location>
        <position position="76"/>
    </location>
    <ligand>
        <name>Mg(2+)</name>
        <dbReference type="ChEBI" id="CHEBI:18420"/>
        <label>2</label>
    </ligand>
</feature>
<feature type="binding site" evidence="1">
    <location>
        <position position="148"/>
    </location>
    <ligand>
        <name>Mg(2+)</name>
        <dbReference type="ChEBI" id="CHEBI:18420"/>
        <label>1</label>
    </ligand>
</feature>